<evidence type="ECO:0000250" key="1"/>
<evidence type="ECO:0000255" key="2"/>
<evidence type="ECO:0000255" key="3">
    <source>
        <dbReference type="PROSITE-ProRule" id="PRU00274"/>
    </source>
</evidence>
<accession>Q91041</accession>
<sequence length="241" mass="25976">MKSLIFVLLLGAVFAEEDKIVGGYECTRHSQAHQVSLNSGYHFCGGSLVSKDWVVSAAHCYKSVLRVRLGEHHIRVNEGTEQFISSSSVIRHPNYSSYNIDNDIMLIKLTEPATLNQYVHAVALPTECAADATMCTVSGWGNTMSSVDDGDKLQCLNLPILSHADCANSYPGMITQSMFCAGYLEGGKDSCQGDSGGPVVCNGVLQGVVSWGYGCAERDNPGVYAKVCVLSGWVRDTMASY</sequence>
<feature type="signal peptide" evidence="2">
    <location>
        <begin position="1"/>
        <end position="13"/>
    </location>
</feature>
<feature type="propeptide" id="PRO_0000028311" description="Activation peptide">
    <location>
        <begin position="14"/>
        <end position="19"/>
    </location>
</feature>
<feature type="chain" id="PRO_0000028312" description="Trypsin-10">
    <location>
        <begin position="20"/>
        <end position="241"/>
    </location>
</feature>
<feature type="domain" description="Peptidase S1" evidence="3">
    <location>
        <begin position="20"/>
        <end position="239"/>
    </location>
</feature>
<feature type="active site" description="Charge relay system" evidence="1">
    <location>
        <position position="59"/>
    </location>
</feature>
<feature type="active site" description="Charge relay system" evidence="1">
    <location>
        <position position="103"/>
    </location>
</feature>
<feature type="active site" description="Charge relay system" evidence="1">
    <location>
        <position position="195"/>
    </location>
</feature>
<feature type="site" description="Required for specificity" evidence="1">
    <location>
        <position position="189"/>
    </location>
</feature>
<feature type="disulfide bond" evidence="3">
    <location>
        <begin position="26"/>
        <end position="155"/>
    </location>
</feature>
<feature type="disulfide bond" evidence="3">
    <location>
        <begin position="44"/>
        <end position="60"/>
    </location>
</feature>
<feature type="disulfide bond" evidence="3">
    <location>
        <begin position="128"/>
        <end position="228"/>
    </location>
</feature>
<feature type="disulfide bond" evidence="3">
    <location>
        <begin position="135"/>
        <end position="201"/>
    </location>
</feature>
<feature type="disulfide bond" evidence="3">
    <location>
        <begin position="166"/>
        <end position="180"/>
    </location>
</feature>
<feature type="disulfide bond" evidence="3">
    <location>
        <begin position="191"/>
        <end position="215"/>
    </location>
</feature>
<protein>
    <recommendedName>
        <fullName>Trypsin-10</fullName>
        <ecNumber>3.4.21.4</ecNumber>
    </recommendedName>
    <alternativeName>
        <fullName>Trypsin X</fullName>
    </alternativeName>
</protein>
<proteinExistence type="evidence at transcript level"/>
<organism>
    <name type="scientific">Gadus morhua</name>
    <name type="common">Atlantic cod</name>
    <dbReference type="NCBI Taxonomy" id="8049"/>
    <lineage>
        <taxon>Eukaryota</taxon>
        <taxon>Metazoa</taxon>
        <taxon>Chordata</taxon>
        <taxon>Craniata</taxon>
        <taxon>Vertebrata</taxon>
        <taxon>Euteleostomi</taxon>
        <taxon>Actinopterygii</taxon>
        <taxon>Neopterygii</taxon>
        <taxon>Teleostei</taxon>
        <taxon>Neoteleostei</taxon>
        <taxon>Acanthomorphata</taxon>
        <taxon>Zeiogadaria</taxon>
        <taxon>Gadariae</taxon>
        <taxon>Gadiformes</taxon>
        <taxon>Gadoidei</taxon>
        <taxon>Gadidae</taxon>
        <taxon>Gadus</taxon>
    </lineage>
</organism>
<dbReference type="EC" id="3.4.21.4"/>
<dbReference type="EMBL" id="X76887">
    <property type="protein sequence ID" value="CAA54215.1"/>
    <property type="molecule type" value="mRNA"/>
</dbReference>
<dbReference type="PIR" id="S39048">
    <property type="entry name" value="S39048"/>
</dbReference>
<dbReference type="SMR" id="Q91041"/>
<dbReference type="STRING" id="8049.ENSGMOP00000014559"/>
<dbReference type="MEROPS" id="S01.125"/>
<dbReference type="Proteomes" id="UP000694546">
    <property type="component" value="Unplaced"/>
</dbReference>
<dbReference type="GO" id="GO:0005615">
    <property type="term" value="C:extracellular space"/>
    <property type="evidence" value="ECO:0007669"/>
    <property type="project" value="TreeGrafter"/>
</dbReference>
<dbReference type="GO" id="GO:0004252">
    <property type="term" value="F:serine-type endopeptidase activity"/>
    <property type="evidence" value="ECO:0007669"/>
    <property type="project" value="UniProtKB-EC"/>
</dbReference>
<dbReference type="GO" id="GO:0007586">
    <property type="term" value="P:digestion"/>
    <property type="evidence" value="ECO:0007669"/>
    <property type="project" value="UniProtKB-KW"/>
</dbReference>
<dbReference type="GO" id="GO:0006508">
    <property type="term" value="P:proteolysis"/>
    <property type="evidence" value="ECO:0007669"/>
    <property type="project" value="UniProtKB-KW"/>
</dbReference>
<dbReference type="CDD" id="cd00190">
    <property type="entry name" value="Tryp_SPc"/>
    <property type="match status" value="1"/>
</dbReference>
<dbReference type="FunFam" id="2.40.10.10:FF:000008">
    <property type="entry name" value="Cationic trypsin"/>
    <property type="match status" value="1"/>
</dbReference>
<dbReference type="FunFam" id="2.40.10.10:FF:000005">
    <property type="entry name" value="Serine protease 37"/>
    <property type="match status" value="1"/>
</dbReference>
<dbReference type="Gene3D" id="2.40.10.10">
    <property type="entry name" value="Trypsin-like serine proteases"/>
    <property type="match status" value="2"/>
</dbReference>
<dbReference type="InterPro" id="IPR009003">
    <property type="entry name" value="Peptidase_S1_PA"/>
</dbReference>
<dbReference type="InterPro" id="IPR043504">
    <property type="entry name" value="Peptidase_S1_PA_chymotrypsin"/>
</dbReference>
<dbReference type="InterPro" id="IPR001314">
    <property type="entry name" value="Peptidase_S1A"/>
</dbReference>
<dbReference type="InterPro" id="IPR050127">
    <property type="entry name" value="Serine_Proteases_S1"/>
</dbReference>
<dbReference type="InterPro" id="IPR001254">
    <property type="entry name" value="Trypsin_dom"/>
</dbReference>
<dbReference type="InterPro" id="IPR018114">
    <property type="entry name" value="TRYPSIN_HIS"/>
</dbReference>
<dbReference type="InterPro" id="IPR033116">
    <property type="entry name" value="TRYPSIN_SER"/>
</dbReference>
<dbReference type="PANTHER" id="PTHR24264">
    <property type="entry name" value="TRYPSIN-RELATED"/>
    <property type="match status" value="1"/>
</dbReference>
<dbReference type="PANTHER" id="PTHR24264:SF6">
    <property type="entry name" value="TRYPSINOGEN 1A-RELATED"/>
    <property type="match status" value="1"/>
</dbReference>
<dbReference type="Pfam" id="PF00089">
    <property type="entry name" value="Trypsin"/>
    <property type="match status" value="1"/>
</dbReference>
<dbReference type="PRINTS" id="PR00722">
    <property type="entry name" value="CHYMOTRYPSIN"/>
</dbReference>
<dbReference type="SMART" id="SM00020">
    <property type="entry name" value="Tryp_SPc"/>
    <property type="match status" value="1"/>
</dbReference>
<dbReference type="SUPFAM" id="SSF50494">
    <property type="entry name" value="Trypsin-like serine proteases"/>
    <property type="match status" value="1"/>
</dbReference>
<dbReference type="PROSITE" id="PS50240">
    <property type="entry name" value="TRYPSIN_DOM"/>
    <property type="match status" value="1"/>
</dbReference>
<dbReference type="PROSITE" id="PS00134">
    <property type="entry name" value="TRYPSIN_HIS"/>
    <property type="match status" value="1"/>
</dbReference>
<dbReference type="PROSITE" id="PS00135">
    <property type="entry name" value="TRYPSIN_SER"/>
    <property type="match status" value="1"/>
</dbReference>
<reference key="1">
    <citation type="journal article" date="1993" name="Eur. J. Biochem.">
        <title>Isolation and characterization of cDNAs from Atlantic cod encoding two different forms of trypsinogen.</title>
        <authorList>
            <person name="Gudmundsdottir A."/>
            <person name="Gudmundsdottir E."/>
            <person name="Oskarsson S."/>
            <person name="Bjarnason J.B."/>
            <person name="Eakin A.E."/>
            <person name="Craik C.S."/>
        </authorList>
    </citation>
    <scope>NUCLEOTIDE SEQUENCE [MRNA]</scope>
    <source>
        <tissue>Pyloric caecum</tissue>
    </source>
</reference>
<keyword id="KW-0222">Digestion</keyword>
<keyword id="KW-1015">Disulfide bond</keyword>
<keyword id="KW-0378">Hydrolase</keyword>
<keyword id="KW-0645">Protease</keyword>
<keyword id="KW-1185">Reference proteome</keyword>
<keyword id="KW-0964">Secreted</keyword>
<keyword id="KW-0720">Serine protease</keyword>
<keyword id="KW-0732">Signal</keyword>
<keyword id="KW-0865">Zymogen</keyword>
<comment type="catalytic activity">
    <reaction>
        <text>Preferential cleavage: Arg-|-Xaa, Lys-|-Xaa.</text>
        <dbReference type="EC" id="3.4.21.4"/>
    </reaction>
</comment>
<comment type="subcellular location">
    <subcellularLocation>
        <location>Secreted</location>
        <location>Extracellular space</location>
    </subcellularLocation>
</comment>
<comment type="similarity">
    <text evidence="3">Belongs to the peptidase S1 family.</text>
</comment>
<name>TRYX_GADMO</name>